<protein>
    <recommendedName>
        <fullName>Putative thymidylate kinase</fullName>
        <ecNumber>2.7.4.9</ecNumber>
    </recommendedName>
    <alternativeName>
        <fullName>dTMP kinase</fullName>
    </alternativeName>
</protein>
<comment type="catalytic activity">
    <reaction>
        <text>dTMP + ATP = dTDP + ADP</text>
        <dbReference type="Rhea" id="RHEA:13517"/>
        <dbReference type="ChEBI" id="CHEBI:30616"/>
        <dbReference type="ChEBI" id="CHEBI:58369"/>
        <dbReference type="ChEBI" id="CHEBI:63528"/>
        <dbReference type="ChEBI" id="CHEBI:456216"/>
        <dbReference type="EC" id="2.7.4.9"/>
    </reaction>
</comment>
<comment type="similarity">
    <text evidence="2">Belongs to the thymidylate kinase family.</text>
</comment>
<comment type="caution">
    <text evidence="2">Could be inactive due to a defective ATP-binding site.</text>
</comment>
<dbReference type="EC" id="2.7.4.9"/>
<dbReference type="EMBL" id="BA000002">
    <property type="protein sequence ID" value="BAA81101.1"/>
    <property type="molecule type" value="Genomic_DNA"/>
</dbReference>
<dbReference type="PIR" id="E72514">
    <property type="entry name" value="E72514"/>
</dbReference>
<dbReference type="RefSeq" id="WP_010866789.1">
    <property type="nucleotide sequence ID" value="NC_000854.2"/>
</dbReference>
<dbReference type="SMR" id="Q9YA48"/>
<dbReference type="STRING" id="272557.APE_2090"/>
<dbReference type="EnsemblBacteria" id="BAA81101">
    <property type="protein sequence ID" value="BAA81101"/>
    <property type="gene ID" value="APE_2090"/>
</dbReference>
<dbReference type="GeneID" id="1445185"/>
<dbReference type="KEGG" id="ape:APE_2090"/>
<dbReference type="PATRIC" id="fig|272557.25.peg.1394"/>
<dbReference type="eggNOG" id="arCOG01891">
    <property type="taxonomic scope" value="Archaea"/>
</dbReference>
<dbReference type="Proteomes" id="UP000002518">
    <property type="component" value="Chromosome"/>
</dbReference>
<dbReference type="GO" id="GO:0005737">
    <property type="term" value="C:cytoplasm"/>
    <property type="evidence" value="ECO:0007669"/>
    <property type="project" value="TreeGrafter"/>
</dbReference>
<dbReference type="GO" id="GO:0005524">
    <property type="term" value="F:ATP binding"/>
    <property type="evidence" value="ECO:0007669"/>
    <property type="project" value="UniProtKB-UniRule"/>
</dbReference>
<dbReference type="GO" id="GO:0004798">
    <property type="term" value="F:dTMP kinase activity"/>
    <property type="evidence" value="ECO:0007669"/>
    <property type="project" value="UniProtKB-UniRule"/>
</dbReference>
<dbReference type="GO" id="GO:0006233">
    <property type="term" value="P:dTDP biosynthetic process"/>
    <property type="evidence" value="ECO:0007669"/>
    <property type="project" value="InterPro"/>
</dbReference>
<dbReference type="GO" id="GO:0006235">
    <property type="term" value="P:dTTP biosynthetic process"/>
    <property type="evidence" value="ECO:0007669"/>
    <property type="project" value="UniProtKB-UniRule"/>
</dbReference>
<dbReference type="GO" id="GO:0006227">
    <property type="term" value="P:dUDP biosynthetic process"/>
    <property type="evidence" value="ECO:0007669"/>
    <property type="project" value="TreeGrafter"/>
</dbReference>
<dbReference type="CDD" id="cd01672">
    <property type="entry name" value="TMPK"/>
    <property type="match status" value="1"/>
</dbReference>
<dbReference type="Gene3D" id="3.40.50.300">
    <property type="entry name" value="P-loop containing nucleotide triphosphate hydrolases"/>
    <property type="match status" value="1"/>
</dbReference>
<dbReference type="HAMAP" id="MF_00165">
    <property type="entry name" value="Thymidylate_kinase"/>
    <property type="match status" value="1"/>
</dbReference>
<dbReference type="InterPro" id="IPR027417">
    <property type="entry name" value="P-loop_NTPase"/>
</dbReference>
<dbReference type="InterPro" id="IPR039430">
    <property type="entry name" value="Thymidylate_kin-like_dom"/>
</dbReference>
<dbReference type="InterPro" id="IPR018095">
    <property type="entry name" value="Thymidylate_kin_CS"/>
</dbReference>
<dbReference type="InterPro" id="IPR018094">
    <property type="entry name" value="Thymidylate_kinase"/>
</dbReference>
<dbReference type="NCBIfam" id="TIGR00041">
    <property type="entry name" value="DTMP_kinase"/>
    <property type="match status" value="1"/>
</dbReference>
<dbReference type="PANTHER" id="PTHR10344">
    <property type="entry name" value="THYMIDYLATE KINASE"/>
    <property type="match status" value="1"/>
</dbReference>
<dbReference type="PANTHER" id="PTHR10344:SF4">
    <property type="entry name" value="UMP-CMP KINASE 2, MITOCHONDRIAL"/>
    <property type="match status" value="1"/>
</dbReference>
<dbReference type="Pfam" id="PF02223">
    <property type="entry name" value="Thymidylate_kin"/>
    <property type="match status" value="1"/>
</dbReference>
<dbReference type="SUPFAM" id="SSF52540">
    <property type="entry name" value="P-loop containing nucleoside triphosphate hydrolases"/>
    <property type="match status" value="1"/>
</dbReference>
<dbReference type="PROSITE" id="PS01331">
    <property type="entry name" value="THYMIDYLATE_KINASE"/>
    <property type="match status" value="1"/>
</dbReference>
<proteinExistence type="inferred from homology"/>
<gene>
    <name type="primary">tmk</name>
    <name type="ordered locus">APE_2090</name>
</gene>
<accession>Q9YA48</accession>
<feature type="chain" id="PRO_0000155381" description="Putative thymidylate kinase">
    <location>
        <begin position="1"/>
        <end position="208"/>
    </location>
</feature>
<feature type="region of interest" description="Defective ATP-binding" evidence="1">
    <location>
        <begin position="8"/>
        <end position="15"/>
    </location>
</feature>
<organism>
    <name type="scientific">Aeropyrum pernix (strain ATCC 700893 / DSM 11879 / JCM 9820 / NBRC 100138 / K1)</name>
    <dbReference type="NCBI Taxonomy" id="272557"/>
    <lineage>
        <taxon>Archaea</taxon>
        <taxon>Thermoproteota</taxon>
        <taxon>Thermoprotei</taxon>
        <taxon>Desulfurococcales</taxon>
        <taxon>Desulfurococcaceae</taxon>
        <taxon>Aeropyrum</taxon>
    </lineage>
</organism>
<sequence length="208" mass="22945">MRIVALEGIDGSGVSTHSRLLHARLAGAGVKSCLWKEPTEGPVGRLIRGFLRSTEGVDSDLMALLFAADRLWGLRLGVVERCGGSPEVLVVDRYKYSSLAYQGVGSGLEWVDAVNRKAPEAEILVYIDVPTEVALRRITARERREVFETPEFLERVKSMYEEVLRLARARGVKVIRVEGVRGGVERGIEDVQGEIAERVFEALGLARA</sequence>
<reference key="1">
    <citation type="journal article" date="1999" name="DNA Res.">
        <title>Complete genome sequence of an aerobic hyper-thermophilic crenarchaeon, Aeropyrum pernix K1.</title>
        <authorList>
            <person name="Kawarabayasi Y."/>
            <person name="Hino Y."/>
            <person name="Horikawa H."/>
            <person name="Yamazaki S."/>
            <person name="Haikawa Y."/>
            <person name="Jin-no K."/>
            <person name="Takahashi M."/>
            <person name="Sekine M."/>
            <person name="Baba S."/>
            <person name="Ankai A."/>
            <person name="Kosugi H."/>
            <person name="Hosoyama A."/>
            <person name="Fukui S."/>
            <person name="Nagai Y."/>
            <person name="Nishijima K."/>
            <person name="Nakazawa H."/>
            <person name="Takamiya M."/>
            <person name="Masuda S."/>
            <person name="Funahashi T."/>
            <person name="Tanaka T."/>
            <person name="Kudoh Y."/>
            <person name="Yamazaki J."/>
            <person name="Kushida N."/>
            <person name="Oguchi A."/>
            <person name="Aoki K."/>
            <person name="Kubota K."/>
            <person name="Nakamura Y."/>
            <person name="Nomura N."/>
            <person name="Sako Y."/>
            <person name="Kikuchi H."/>
        </authorList>
    </citation>
    <scope>NUCLEOTIDE SEQUENCE [LARGE SCALE GENOMIC DNA]</scope>
    <source>
        <strain>ATCC 700893 / DSM 11879 / JCM 9820 / NBRC 100138 / K1</strain>
    </source>
</reference>
<keyword id="KW-0067">ATP-binding</keyword>
<keyword id="KW-0418">Kinase</keyword>
<keyword id="KW-0545">Nucleotide biosynthesis</keyword>
<keyword id="KW-0547">Nucleotide-binding</keyword>
<keyword id="KW-1185">Reference proteome</keyword>
<keyword id="KW-0808">Transferase</keyword>
<evidence type="ECO:0000255" key="1"/>
<evidence type="ECO:0000305" key="2"/>
<name>KTHY_AERPE</name>